<dbReference type="EMBL" id="M64643">
    <property type="protein sequence ID" value="AAA28695.1"/>
    <property type="molecule type" value="mRNA"/>
</dbReference>
<dbReference type="EMBL" id="AE013599">
    <property type="protein sequence ID" value="AAF47199.1"/>
    <property type="molecule type" value="Genomic_DNA"/>
</dbReference>
<dbReference type="EMBL" id="AY089283">
    <property type="protein sequence ID" value="AAL90021.1"/>
    <property type="molecule type" value="mRNA"/>
</dbReference>
<dbReference type="RefSeq" id="NP_001261168.1">
    <property type="nucleotide sequence ID" value="NM_001274239.1"/>
</dbReference>
<dbReference type="RefSeq" id="NP_523845.2">
    <property type="nucleotide sequence ID" value="NM_079121.3"/>
</dbReference>
<dbReference type="SMR" id="P26270"/>
<dbReference type="BioGRID" id="63468">
    <property type="interactions" value="30"/>
</dbReference>
<dbReference type="ComplexPortal" id="CPX-9070">
    <property type="entry name" value="26S proteasome complex"/>
</dbReference>
<dbReference type="ComplexPortal" id="CPX-9087">
    <property type="entry name" value="26S proteasome complex, testis-specific variant"/>
</dbReference>
<dbReference type="DIP" id="DIP-22847N"/>
<dbReference type="FunCoup" id="P26270">
    <property type="interactions" value="1758"/>
</dbReference>
<dbReference type="IntAct" id="P26270">
    <property type="interactions" value="47"/>
</dbReference>
<dbReference type="STRING" id="7227.FBpp0303270"/>
<dbReference type="MEROPS" id="M67.973"/>
<dbReference type="PaxDb" id="7227-FBpp0305141"/>
<dbReference type="EnsemblMetazoa" id="FBtr0072290">
    <property type="protein sequence ID" value="FBpp0072197"/>
    <property type="gene ID" value="FBgn0002787"/>
</dbReference>
<dbReference type="EnsemblMetazoa" id="FBtr0332921">
    <property type="protein sequence ID" value="FBpp0305141"/>
    <property type="gene ID" value="FBgn0002787"/>
</dbReference>
<dbReference type="GeneID" id="37894"/>
<dbReference type="KEGG" id="dme:Dmel_CG3416"/>
<dbReference type="UCSC" id="CG3416-RA">
    <property type="organism name" value="d. melanogaster"/>
</dbReference>
<dbReference type="AGR" id="FB:FBgn0002787"/>
<dbReference type="CTD" id="37894"/>
<dbReference type="FlyBase" id="FBgn0002787">
    <property type="gene designation" value="Rpn8"/>
</dbReference>
<dbReference type="VEuPathDB" id="VectorBase:FBgn0002787"/>
<dbReference type="eggNOG" id="KOG1556">
    <property type="taxonomic scope" value="Eukaryota"/>
</dbReference>
<dbReference type="GeneTree" id="ENSGT00950000183073"/>
<dbReference type="HOGENOM" id="CLU_027018_3_0_1"/>
<dbReference type="InParanoid" id="P26270"/>
<dbReference type="OMA" id="HAMSIKT"/>
<dbReference type="OrthoDB" id="10256771at2759"/>
<dbReference type="PhylomeDB" id="P26270"/>
<dbReference type="BRENDA" id="3.4.25.1">
    <property type="organism ID" value="1994"/>
</dbReference>
<dbReference type="Reactome" id="R-DME-1169091">
    <property type="pathway name" value="Activation of NF-kappaB in B cells"/>
</dbReference>
<dbReference type="Reactome" id="R-DME-1234176">
    <property type="pathway name" value="Oxygen-dependent proline hydroxylation of Hypoxia-inducible Factor Alpha"/>
</dbReference>
<dbReference type="Reactome" id="R-DME-1236978">
    <property type="pathway name" value="Cross-presentation of soluble exogenous antigens (endosomes)"/>
</dbReference>
<dbReference type="Reactome" id="R-DME-174084">
    <property type="pathway name" value="Autodegradation of Cdh1 by Cdh1:APC/C"/>
</dbReference>
<dbReference type="Reactome" id="R-DME-174154">
    <property type="pathway name" value="APC/C:Cdc20 mediated degradation of Securin"/>
</dbReference>
<dbReference type="Reactome" id="R-DME-174178">
    <property type="pathway name" value="APC/C:Cdh1 mediated degradation of Cdc20 and other APC/C:Cdh1 targeted proteins in late mitosis/early G1"/>
</dbReference>
<dbReference type="Reactome" id="R-DME-174184">
    <property type="pathway name" value="Cdc20:Phospho-APC/C mediated degradation of Cyclin A"/>
</dbReference>
<dbReference type="Reactome" id="R-DME-187577">
    <property type="pathway name" value="SCF(Skp2)-mediated degradation of p27/p21"/>
</dbReference>
<dbReference type="Reactome" id="R-DME-195253">
    <property type="pathway name" value="Degradation of beta-catenin by the destruction complex"/>
</dbReference>
<dbReference type="Reactome" id="R-DME-202424">
    <property type="pathway name" value="Downstream TCR signaling"/>
</dbReference>
<dbReference type="Reactome" id="R-DME-209360">
    <property type="pathway name" value="Ubiquitination and proteolysis of phosphorylated CI"/>
</dbReference>
<dbReference type="Reactome" id="R-DME-209406">
    <property type="pathway name" value="Degradation of NF-kappa-B inhibitor, CACT"/>
</dbReference>
<dbReference type="Reactome" id="R-DME-209461">
    <property type="pathway name" value="Ubiquitination and degradation of phosphorylated ARM"/>
</dbReference>
<dbReference type="Reactome" id="R-DME-216167">
    <property type="pathway name" value="Nuclear CI is degraded"/>
</dbReference>
<dbReference type="Reactome" id="R-DME-2467813">
    <property type="pathway name" value="Separation of Sister Chromatids"/>
</dbReference>
<dbReference type="Reactome" id="R-DME-2871837">
    <property type="pathway name" value="FCERI mediated NF-kB activation"/>
</dbReference>
<dbReference type="Reactome" id="R-DME-350562">
    <property type="pathway name" value="Regulation of ornithine decarboxylase (ODC)"/>
</dbReference>
<dbReference type="Reactome" id="R-DME-382556">
    <property type="pathway name" value="ABC-family proteins mediated transport"/>
</dbReference>
<dbReference type="Reactome" id="R-DME-432395">
    <property type="pathway name" value="Degradation of TIM"/>
</dbReference>
<dbReference type="Reactome" id="R-DME-432524">
    <property type="pathway name" value="Degradation of PER"/>
</dbReference>
<dbReference type="Reactome" id="R-DME-432626">
    <property type="pathway name" value="Circadian Clock pathway"/>
</dbReference>
<dbReference type="Reactome" id="R-DME-450408">
    <property type="pathway name" value="AUF1 (hnRNP D0) binds and destabilizes mRNA"/>
</dbReference>
<dbReference type="Reactome" id="R-DME-4608870">
    <property type="pathway name" value="Asymmetric localization of PCP proteins"/>
</dbReference>
<dbReference type="Reactome" id="R-DME-4641257">
    <property type="pathway name" value="Degradation of AXIN"/>
</dbReference>
<dbReference type="Reactome" id="R-DME-4641258">
    <property type="pathway name" value="Degradation of DVL"/>
</dbReference>
<dbReference type="Reactome" id="R-DME-5358346">
    <property type="pathway name" value="Hedgehog ligand biogenesis"/>
</dbReference>
<dbReference type="Reactome" id="R-DME-538864">
    <property type="pathway name" value="Degradation of CRY"/>
</dbReference>
<dbReference type="Reactome" id="R-DME-5607761">
    <property type="pathway name" value="Dectin-1 mediated noncanonical NF-kB signaling"/>
</dbReference>
<dbReference type="Reactome" id="R-DME-5607764">
    <property type="pathway name" value="CLEC7A (Dectin-1) signaling"/>
</dbReference>
<dbReference type="Reactome" id="R-DME-5610780">
    <property type="pathway name" value="Degradation of GLI1 by the proteasome"/>
</dbReference>
<dbReference type="Reactome" id="R-DME-5610785">
    <property type="pathway name" value="GLI3 is processed to GLI3R by the proteasome"/>
</dbReference>
<dbReference type="Reactome" id="R-DME-5632684">
    <property type="pathway name" value="Hedgehog 'on' state"/>
</dbReference>
<dbReference type="Reactome" id="R-DME-5658442">
    <property type="pathway name" value="Regulation of RAS by GAPs"/>
</dbReference>
<dbReference type="Reactome" id="R-DME-5676590">
    <property type="pathway name" value="NIK--&gt;noncanonical NF-kB signaling"/>
</dbReference>
<dbReference type="Reactome" id="R-DME-5689603">
    <property type="pathway name" value="UCH proteinases"/>
</dbReference>
<dbReference type="Reactome" id="R-DME-5689880">
    <property type="pathway name" value="Ub-specific processing proteases"/>
</dbReference>
<dbReference type="Reactome" id="R-DME-6798695">
    <property type="pathway name" value="Neutrophil degranulation"/>
</dbReference>
<dbReference type="Reactome" id="R-DME-68949">
    <property type="pathway name" value="Orc1 removal from chromatin"/>
</dbReference>
<dbReference type="Reactome" id="R-DME-69017">
    <property type="pathway name" value="CDK-mediated phosphorylation and removal of Cdc6"/>
</dbReference>
<dbReference type="Reactome" id="R-DME-69601">
    <property type="pathway name" value="Ubiquitin Mediated Degradation of Phosphorylated Cdc25A"/>
</dbReference>
<dbReference type="Reactome" id="R-DME-75815">
    <property type="pathway name" value="Ubiquitin-dependent degradation of Cyclin D"/>
</dbReference>
<dbReference type="Reactome" id="R-DME-8854050">
    <property type="pathway name" value="FBXL7 down-regulates AURKA during mitotic entry and in early mitosis"/>
</dbReference>
<dbReference type="Reactome" id="R-DME-8939236">
    <property type="pathway name" value="RUNX1 regulates transcription of genes involved in differentiation of HSCs"/>
</dbReference>
<dbReference type="Reactome" id="R-DME-8939902">
    <property type="pathway name" value="Regulation of RUNX2 expression and activity"/>
</dbReference>
<dbReference type="Reactome" id="R-DME-8941858">
    <property type="pathway name" value="Regulation of RUNX3 expression and activity"/>
</dbReference>
<dbReference type="Reactome" id="R-DME-8948751">
    <property type="pathway name" value="Regulation of PTEN stability and activity"/>
</dbReference>
<dbReference type="Reactome" id="R-DME-8951664">
    <property type="pathway name" value="Neddylation"/>
</dbReference>
<dbReference type="Reactome" id="R-DME-9020702">
    <property type="pathway name" value="Interleukin-1 signaling"/>
</dbReference>
<dbReference type="Reactome" id="R-DME-9755511">
    <property type="pathway name" value="KEAP1-NFE2L2 pathway"/>
</dbReference>
<dbReference type="Reactome" id="R-DME-9762114">
    <property type="pathway name" value="GSK3B and BTRC:CUL1-mediated-degradation of NFE2L2"/>
</dbReference>
<dbReference type="Reactome" id="R-DME-983168">
    <property type="pathway name" value="Antigen processing: Ubiquitination &amp; Proteasome degradation"/>
</dbReference>
<dbReference type="Reactome" id="R-DME-9907900">
    <property type="pathway name" value="Proteasome assembly"/>
</dbReference>
<dbReference type="SignaLink" id="P26270"/>
<dbReference type="BioGRID-ORCS" id="37894">
    <property type="hits" value="1 hit in 1 CRISPR screen"/>
</dbReference>
<dbReference type="GenomeRNAi" id="37894"/>
<dbReference type="PRO" id="PR:P26270"/>
<dbReference type="Proteomes" id="UP000000803">
    <property type="component" value="Chromosome 2R"/>
</dbReference>
<dbReference type="Bgee" id="FBgn0002787">
    <property type="expression patterns" value="Expressed in eye disc (Drosophila) and 198 other cell types or tissues"/>
</dbReference>
<dbReference type="ExpressionAtlas" id="P26270">
    <property type="expression patterns" value="baseline and differential"/>
</dbReference>
<dbReference type="GO" id="GO:0005829">
    <property type="term" value="C:cytosol"/>
    <property type="evidence" value="ECO:0000304"/>
    <property type="project" value="Reactome"/>
</dbReference>
<dbReference type="GO" id="GO:0030425">
    <property type="term" value="C:dendrite"/>
    <property type="evidence" value="ECO:0000315"/>
    <property type="project" value="FlyBase"/>
</dbReference>
<dbReference type="GO" id="GO:0005654">
    <property type="term" value="C:nucleoplasm"/>
    <property type="evidence" value="ECO:0000304"/>
    <property type="project" value="Reactome"/>
</dbReference>
<dbReference type="GO" id="GO:0000502">
    <property type="term" value="C:proteasome complex"/>
    <property type="evidence" value="ECO:0000314"/>
    <property type="project" value="FlyBase"/>
</dbReference>
<dbReference type="GO" id="GO:0005838">
    <property type="term" value="C:proteasome regulatory particle"/>
    <property type="evidence" value="ECO:0000314"/>
    <property type="project" value="FlyBase"/>
</dbReference>
<dbReference type="GO" id="GO:0008541">
    <property type="term" value="C:proteasome regulatory particle, lid subcomplex"/>
    <property type="evidence" value="ECO:0000250"/>
    <property type="project" value="FlyBase"/>
</dbReference>
<dbReference type="GO" id="GO:0043161">
    <property type="term" value="P:proteasome-mediated ubiquitin-dependent protein catabolic process"/>
    <property type="evidence" value="ECO:0000315"/>
    <property type="project" value="FlyBase"/>
</dbReference>
<dbReference type="CDD" id="cd08062">
    <property type="entry name" value="MPN_RPN7_8"/>
    <property type="match status" value="1"/>
</dbReference>
<dbReference type="FunFam" id="3.40.140.10:FF:000009">
    <property type="entry name" value="26S proteasome non-ATPase regulatory subunit 7"/>
    <property type="match status" value="1"/>
</dbReference>
<dbReference type="Gene3D" id="3.40.140.10">
    <property type="entry name" value="Cytidine Deaminase, domain 2"/>
    <property type="match status" value="1"/>
</dbReference>
<dbReference type="InterPro" id="IPR024969">
    <property type="entry name" value="EIF3F/CSN6-like_C"/>
</dbReference>
<dbReference type="InterPro" id="IPR000555">
    <property type="entry name" value="JAMM/MPN+_dom"/>
</dbReference>
<dbReference type="InterPro" id="IPR037518">
    <property type="entry name" value="MPN"/>
</dbReference>
<dbReference type="InterPro" id="IPR033858">
    <property type="entry name" value="MPN_RPN7_8"/>
</dbReference>
<dbReference type="PANTHER" id="PTHR10540:SF7">
    <property type="entry name" value="26S PROTEASOME NON-ATPASE REGULATORY SUBUNIT 7"/>
    <property type="match status" value="1"/>
</dbReference>
<dbReference type="PANTHER" id="PTHR10540">
    <property type="entry name" value="EUKARYOTIC TRANSLATION INITIATION FACTOR 3 SUBUNIT F-RELATED"/>
    <property type="match status" value="1"/>
</dbReference>
<dbReference type="Pfam" id="PF01398">
    <property type="entry name" value="JAB"/>
    <property type="match status" value="1"/>
</dbReference>
<dbReference type="Pfam" id="PF13012">
    <property type="entry name" value="MitMem_reg"/>
    <property type="match status" value="1"/>
</dbReference>
<dbReference type="SMART" id="SM00232">
    <property type="entry name" value="JAB_MPN"/>
    <property type="match status" value="1"/>
</dbReference>
<dbReference type="PROSITE" id="PS50249">
    <property type="entry name" value="MPN"/>
    <property type="match status" value="1"/>
</dbReference>
<keyword id="KW-0903">Direct protein sequencing</keyword>
<keyword id="KW-0647">Proteasome</keyword>
<keyword id="KW-1185">Reference proteome</keyword>
<comment type="function">
    <text evidence="3">Acts as a regulatory subunit of the 26S proteasome which is involved in the ATP-dependent degradation of ubiquitinated proteins.</text>
</comment>
<comment type="interaction">
    <interactant intactId="EBI-253612">
        <id>P26270</id>
    </interactant>
    <interactant intactId="EBI-178674">
        <id>Q9V3H2</id>
        <label>Rpn11</label>
    </interactant>
    <organismsDiffer>false</organismsDiffer>
    <experiments>3</experiments>
</comment>
<comment type="interaction">
    <interactant intactId="EBI-253612">
        <id>P26270</id>
    </interactant>
    <interactant intactId="EBI-151692">
        <id>Q7KMP8</id>
        <label>Rpn9</label>
    </interactant>
    <organismsDiffer>false</organismsDiffer>
    <experiments>4</experiments>
</comment>
<comment type="similarity">
    <text evidence="4">Belongs to the peptidase M67A family.</text>
</comment>
<gene>
    <name type="primary">Rpn8</name>
    <name type="synonym">Mov34</name>
    <name type="ORF">CG3416</name>
</gene>
<organism>
    <name type="scientific">Drosophila melanogaster</name>
    <name type="common">Fruit fly</name>
    <dbReference type="NCBI Taxonomy" id="7227"/>
    <lineage>
        <taxon>Eukaryota</taxon>
        <taxon>Metazoa</taxon>
        <taxon>Ecdysozoa</taxon>
        <taxon>Arthropoda</taxon>
        <taxon>Hexapoda</taxon>
        <taxon>Insecta</taxon>
        <taxon>Pterygota</taxon>
        <taxon>Neoptera</taxon>
        <taxon>Endopterygota</taxon>
        <taxon>Diptera</taxon>
        <taxon>Brachycera</taxon>
        <taxon>Muscomorpha</taxon>
        <taxon>Ephydroidea</taxon>
        <taxon>Drosophilidae</taxon>
        <taxon>Drosophila</taxon>
        <taxon>Sophophora</taxon>
    </lineage>
</organism>
<proteinExistence type="evidence at protein level"/>
<sequence length="338" mass="38089">MPSQEVSVNKVIVHPLVLLSVVDHFNRMGKIGNQKRVVGVLLGCWRSKGVLDVSNSFAVPFDEDDKDKSVWFLDHDYLENMYGMFKKVNARERVVGWYHTGPKLHQNDIAINELVRRYCPNSVLVIIDAKPKDLGLPTEAYISVEEVHDDGSPTSKTFEHVPSEIGAEEAEEVGVEHLLRDIKDTTVGSLSQKITNQLMGLKGLNAQLRDIKQYLQRVGDSKMPINHQIVYQLQDIFNLLPDITNDQFTGTMYVKTNDQMLVVYLASMVRSIIALHNLINNKLANRDAEEGKSDSKEAKEKNKDSKDKDNKETKDKDGKKAEEKADKGKDEGGKGSRK</sequence>
<evidence type="ECO:0000255" key="1">
    <source>
        <dbReference type="PROSITE-ProRule" id="PRU01182"/>
    </source>
</evidence>
<evidence type="ECO:0000256" key="2">
    <source>
        <dbReference type="SAM" id="MobiDB-lite"/>
    </source>
</evidence>
<evidence type="ECO:0000269" key="3">
    <source>
    </source>
</evidence>
<evidence type="ECO:0000305" key="4"/>
<name>PSMD7_DROME</name>
<reference key="1">
    <citation type="journal article" date="1990" name="Development">
        <title>Molecular analysis of the Mov 34 mutation: transcript disrupted by proviral integration in mice is conserved in Drosophila.</title>
        <authorList>
            <person name="Gridley T."/>
            <person name="Gray D.A."/>
            <person name="Orr-Weaver T."/>
            <person name="Soriano P."/>
            <person name="Barton D.E."/>
            <person name="Francke U."/>
            <person name="Jaenisch R."/>
        </authorList>
    </citation>
    <scope>NUCLEOTIDE SEQUENCE [MRNA]</scope>
    <source>
        <tissue>Head</tissue>
    </source>
</reference>
<reference key="2">
    <citation type="journal article" date="2000" name="Science">
        <title>The genome sequence of Drosophila melanogaster.</title>
        <authorList>
            <person name="Adams M.D."/>
            <person name="Celniker S.E."/>
            <person name="Holt R.A."/>
            <person name="Evans C.A."/>
            <person name="Gocayne J.D."/>
            <person name="Amanatides P.G."/>
            <person name="Scherer S.E."/>
            <person name="Li P.W."/>
            <person name="Hoskins R.A."/>
            <person name="Galle R.F."/>
            <person name="George R.A."/>
            <person name="Lewis S.E."/>
            <person name="Richards S."/>
            <person name="Ashburner M."/>
            <person name="Henderson S.N."/>
            <person name="Sutton G.G."/>
            <person name="Wortman J.R."/>
            <person name="Yandell M.D."/>
            <person name="Zhang Q."/>
            <person name="Chen L.X."/>
            <person name="Brandon R.C."/>
            <person name="Rogers Y.-H.C."/>
            <person name="Blazej R.G."/>
            <person name="Champe M."/>
            <person name="Pfeiffer B.D."/>
            <person name="Wan K.H."/>
            <person name="Doyle C."/>
            <person name="Baxter E.G."/>
            <person name="Helt G."/>
            <person name="Nelson C.R."/>
            <person name="Miklos G.L.G."/>
            <person name="Abril J.F."/>
            <person name="Agbayani A."/>
            <person name="An H.-J."/>
            <person name="Andrews-Pfannkoch C."/>
            <person name="Baldwin D."/>
            <person name="Ballew R.M."/>
            <person name="Basu A."/>
            <person name="Baxendale J."/>
            <person name="Bayraktaroglu L."/>
            <person name="Beasley E.M."/>
            <person name="Beeson K.Y."/>
            <person name="Benos P.V."/>
            <person name="Berman B.P."/>
            <person name="Bhandari D."/>
            <person name="Bolshakov S."/>
            <person name="Borkova D."/>
            <person name="Botchan M.R."/>
            <person name="Bouck J."/>
            <person name="Brokstein P."/>
            <person name="Brottier P."/>
            <person name="Burtis K.C."/>
            <person name="Busam D.A."/>
            <person name="Butler H."/>
            <person name="Cadieu E."/>
            <person name="Center A."/>
            <person name="Chandra I."/>
            <person name="Cherry J.M."/>
            <person name="Cawley S."/>
            <person name="Dahlke C."/>
            <person name="Davenport L.B."/>
            <person name="Davies P."/>
            <person name="de Pablos B."/>
            <person name="Delcher A."/>
            <person name="Deng Z."/>
            <person name="Mays A.D."/>
            <person name="Dew I."/>
            <person name="Dietz S.M."/>
            <person name="Dodson K."/>
            <person name="Doup L.E."/>
            <person name="Downes M."/>
            <person name="Dugan-Rocha S."/>
            <person name="Dunkov B.C."/>
            <person name="Dunn P."/>
            <person name="Durbin K.J."/>
            <person name="Evangelista C.C."/>
            <person name="Ferraz C."/>
            <person name="Ferriera S."/>
            <person name="Fleischmann W."/>
            <person name="Fosler C."/>
            <person name="Gabrielian A.E."/>
            <person name="Garg N.S."/>
            <person name="Gelbart W.M."/>
            <person name="Glasser K."/>
            <person name="Glodek A."/>
            <person name="Gong F."/>
            <person name="Gorrell J.H."/>
            <person name="Gu Z."/>
            <person name="Guan P."/>
            <person name="Harris M."/>
            <person name="Harris N.L."/>
            <person name="Harvey D.A."/>
            <person name="Heiman T.J."/>
            <person name="Hernandez J.R."/>
            <person name="Houck J."/>
            <person name="Hostin D."/>
            <person name="Houston K.A."/>
            <person name="Howland T.J."/>
            <person name="Wei M.-H."/>
            <person name="Ibegwam C."/>
            <person name="Jalali M."/>
            <person name="Kalush F."/>
            <person name="Karpen G.H."/>
            <person name="Ke Z."/>
            <person name="Kennison J.A."/>
            <person name="Ketchum K.A."/>
            <person name="Kimmel B.E."/>
            <person name="Kodira C.D."/>
            <person name="Kraft C.L."/>
            <person name="Kravitz S."/>
            <person name="Kulp D."/>
            <person name="Lai Z."/>
            <person name="Lasko P."/>
            <person name="Lei Y."/>
            <person name="Levitsky A.A."/>
            <person name="Li J.H."/>
            <person name="Li Z."/>
            <person name="Liang Y."/>
            <person name="Lin X."/>
            <person name="Liu X."/>
            <person name="Mattei B."/>
            <person name="McIntosh T.C."/>
            <person name="McLeod M.P."/>
            <person name="McPherson D."/>
            <person name="Merkulov G."/>
            <person name="Milshina N.V."/>
            <person name="Mobarry C."/>
            <person name="Morris J."/>
            <person name="Moshrefi A."/>
            <person name="Mount S.M."/>
            <person name="Moy M."/>
            <person name="Murphy B."/>
            <person name="Murphy L."/>
            <person name="Muzny D.M."/>
            <person name="Nelson D.L."/>
            <person name="Nelson D.R."/>
            <person name="Nelson K.A."/>
            <person name="Nixon K."/>
            <person name="Nusskern D.R."/>
            <person name="Pacleb J.M."/>
            <person name="Palazzolo M."/>
            <person name="Pittman G.S."/>
            <person name="Pan S."/>
            <person name="Pollard J."/>
            <person name="Puri V."/>
            <person name="Reese M.G."/>
            <person name="Reinert K."/>
            <person name="Remington K."/>
            <person name="Saunders R.D.C."/>
            <person name="Scheeler F."/>
            <person name="Shen H."/>
            <person name="Shue B.C."/>
            <person name="Siden-Kiamos I."/>
            <person name="Simpson M."/>
            <person name="Skupski M.P."/>
            <person name="Smith T.J."/>
            <person name="Spier E."/>
            <person name="Spradling A.C."/>
            <person name="Stapleton M."/>
            <person name="Strong R."/>
            <person name="Sun E."/>
            <person name="Svirskas R."/>
            <person name="Tector C."/>
            <person name="Turner R."/>
            <person name="Venter E."/>
            <person name="Wang A.H."/>
            <person name="Wang X."/>
            <person name="Wang Z.-Y."/>
            <person name="Wassarman D.A."/>
            <person name="Weinstock G.M."/>
            <person name="Weissenbach J."/>
            <person name="Williams S.M."/>
            <person name="Woodage T."/>
            <person name="Worley K.C."/>
            <person name="Wu D."/>
            <person name="Yang S."/>
            <person name="Yao Q.A."/>
            <person name="Ye J."/>
            <person name="Yeh R.-F."/>
            <person name="Zaveri J.S."/>
            <person name="Zhan M."/>
            <person name="Zhang G."/>
            <person name="Zhao Q."/>
            <person name="Zheng L."/>
            <person name="Zheng X.H."/>
            <person name="Zhong F.N."/>
            <person name="Zhong W."/>
            <person name="Zhou X."/>
            <person name="Zhu S.C."/>
            <person name="Zhu X."/>
            <person name="Smith H.O."/>
            <person name="Gibbs R.A."/>
            <person name="Myers E.W."/>
            <person name="Rubin G.M."/>
            <person name="Venter J.C."/>
        </authorList>
    </citation>
    <scope>NUCLEOTIDE SEQUENCE [LARGE SCALE GENOMIC DNA]</scope>
    <source>
        <strain>Berkeley</strain>
    </source>
</reference>
<reference key="3">
    <citation type="journal article" date="2002" name="Genome Biol.">
        <title>Annotation of the Drosophila melanogaster euchromatic genome: a systematic review.</title>
        <authorList>
            <person name="Misra S."/>
            <person name="Crosby M.A."/>
            <person name="Mungall C.J."/>
            <person name="Matthews B.B."/>
            <person name="Campbell K.S."/>
            <person name="Hradecky P."/>
            <person name="Huang Y."/>
            <person name="Kaminker J.S."/>
            <person name="Millburn G.H."/>
            <person name="Prochnik S.E."/>
            <person name="Smith C.D."/>
            <person name="Tupy J.L."/>
            <person name="Whitfield E.J."/>
            <person name="Bayraktaroglu L."/>
            <person name="Berman B.P."/>
            <person name="Bettencourt B.R."/>
            <person name="Celniker S.E."/>
            <person name="de Grey A.D.N.J."/>
            <person name="Drysdale R.A."/>
            <person name="Harris N.L."/>
            <person name="Richter J."/>
            <person name="Russo S."/>
            <person name="Schroeder A.J."/>
            <person name="Shu S.Q."/>
            <person name="Stapleton M."/>
            <person name="Yamada C."/>
            <person name="Ashburner M."/>
            <person name="Gelbart W.M."/>
            <person name="Rubin G.M."/>
            <person name="Lewis S.E."/>
        </authorList>
    </citation>
    <scope>GENOME REANNOTATION</scope>
    <source>
        <strain>Berkeley</strain>
    </source>
</reference>
<reference key="4">
    <citation type="journal article" date="2002" name="Genome Biol.">
        <title>A Drosophila full-length cDNA resource.</title>
        <authorList>
            <person name="Stapleton M."/>
            <person name="Carlson J.W."/>
            <person name="Brokstein P."/>
            <person name="Yu C."/>
            <person name="Champe M."/>
            <person name="George R.A."/>
            <person name="Guarin H."/>
            <person name="Kronmiller B."/>
            <person name="Pacleb J.M."/>
            <person name="Park S."/>
            <person name="Wan K.H."/>
            <person name="Rubin G.M."/>
            <person name="Celniker S.E."/>
        </authorList>
    </citation>
    <scope>NUCLEOTIDE SEQUENCE [LARGE SCALE MRNA]</scope>
    <source>
        <strain>Berkeley</strain>
        <tissue>Testis</tissue>
    </source>
</reference>
<reference key="5">
    <citation type="journal article" date="2000" name="J. Cell Biol.">
        <title>The regulatory complex of Drosophila melanogaster 26S proteasomes. Subunit composition and localization of a deubiquitylating enzyme.</title>
        <authorList>
            <person name="Hoelzl H."/>
            <person name="Kapelari B."/>
            <person name="Kellermann J."/>
            <person name="Seemueller E."/>
            <person name="Suemegi M."/>
            <person name="Udvardy A."/>
            <person name="Medalia O."/>
            <person name="Sperling J."/>
            <person name="Mueller S.A."/>
            <person name="Engel A."/>
            <person name="Baumeister W."/>
        </authorList>
    </citation>
    <scope>PROTEIN SEQUENCE OF 2-10</scope>
    <scope>FUNCTION</scope>
    <source>
        <tissue>Embryo</tissue>
    </source>
</reference>
<protein>
    <recommendedName>
        <fullName>26S proteasome non-ATPase regulatory subunit 7</fullName>
    </recommendedName>
    <alternativeName>
        <fullName>26S proteasome regulatory subunit RPN8</fullName>
    </alternativeName>
    <alternativeName>
        <fullName>26S proteasome regulatory subunit S12</fullName>
    </alternativeName>
    <alternativeName>
        <fullName>Proteasome subunit p39B</fullName>
    </alternativeName>
    <alternativeName>
        <fullName>Proteasome subunit p40</fullName>
    </alternativeName>
    <alternativeName>
        <fullName>Protein Mov34</fullName>
    </alternativeName>
</protein>
<feature type="initiator methionine" description="Removed" evidence="3">
    <location>
        <position position="1"/>
    </location>
</feature>
<feature type="chain" id="PRO_0000213945" description="26S proteasome non-ATPase regulatory subunit 7">
    <location>
        <begin position="2"/>
        <end position="338"/>
    </location>
</feature>
<feature type="domain" description="MPN" evidence="1">
    <location>
        <begin position="11"/>
        <end position="147"/>
    </location>
</feature>
<feature type="region of interest" description="Disordered" evidence="2">
    <location>
        <begin position="286"/>
        <end position="338"/>
    </location>
</feature>
<feature type="sequence conflict" description="In Ref. 1; AAA28695." evidence="4" ref="1">
    <original>S</original>
    <variation>T</variation>
    <location>
        <position position="56"/>
    </location>
</feature>
<feature type="sequence conflict" description="In Ref. 1; AAA28695." evidence="4" ref="1">
    <original>E</original>
    <variation>V</variation>
    <location>
        <position position="63"/>
    </location>
</feature>
<feature type="sequence conflict" description="In Ref. 1; AAA28695." evidence="4" ref="1">
    <original>NSVLVIIDAKPKDLGLPTEAYISVEE</original>
    <variation>TPCWSSSTPSPRIWACPQRRTYRWRK</variation>
    <location>
        <begin position="121"/>
        <end position="146"/>
    </location>
</feature>
<feature type="sequence conflict" description="In Ref. 1; AAA28695." evidence="4" ref="1">
    <original>A</original>
    <variation>P</variation>
    <location>
        <position position="167"/>
    </location>
</feature>
<accession>P26270</accession>
<accession>Q9W178</accession>